<dbReference type="EC" id="5.3.1.16" evidence="1"/>
<dbReference type="EMBL" id="CP001078">
    <property type="protein sequence ID" value="ACD51155.1"/>
    <property type="molecule type" value="Genomic_DNA"/>
</dbReference>
<dbReference type="RefSeq" id="WP_012449575.1">
    <property type="nucleotide sequence ID" value="NC_010723.1"/>
</dbReference>
<dbReference type="SMR" id="B2UX21"/>
<dbReference type="KEGG" id="cbt:CLH_2626"/>
<dbReference type="HOGENOM" id="CLU_048577_1_2_9"/>
<dbReference type="UniPathway" id="UPA00031">
    <property type="reaction ID" value="UER00009"/>
</dbReference>
<dbReference type="GO" id="GO:0005737">
    <property type="term" value="C:cytoplasm"/>
    <property type="evidence" value="ECO:0007669"/>
    <property type="project" value="UniProtKB-SubCell"/>
</dbReference>
<dbReference type="GO" id="GO:0003949">
    <property type="term" value="F:1-(5-phosphoribosyl)-5-[(5-phosphoribosylamino)methylideneamino]imidazole-4-carboxamide isomerase activity"/>
    <property type="evidence" value="ECO:0007669"/>
    <property type="project" value="UniProtKB-UniRule"/>
</dbReference>
<dbReference type="GO" id="GO:0000105">
    <property type="term" value="P:L-histidine biosynthetic process"/>
    <property type="evidence" value="ECO:0007669"/>
    <property type="project" value="UniProtKB-UniRule"/>
</dbReference>
<dbReference type="GO" id="GO:0000162">
    <property type="term" value="P:L-tryptophan biosynthetic process"/>
    <property type="evidence" value="ECO:0007669"/>
    <property type="project" value="TreeGrafter"/>
</dbReference>
<dbReference type="CDD" id="cd04732">
    <property type="entry name" value="HisA"/>
    <property type="match status" value="1"/>
</dbReference>
<dbReference type="FunFam" id="3.20.20.70:FF:000009">
    <property type="entry name" value="1-(5-phosphoribosyl)-5-[(5-phosphoribosylamino)methylideneamino] imidazole-4-carboxamide isomerase"/>
    <property type="match status" value="1"/>
</dbReference>
<dbReference type="Gene3D" id="3.20.20.70">
    <property type="entry name" value="Aldolase class I"/>
    <property type="match status" value="1"/>
</dbReference>
<dbReference type="HAMAP" id="MF_01014">
    <property type="entry name" value="HisA"/>
    <property type="match status" value="1"/>
</dbReference>
<dbReference type="InterPro" id="IPR013785">
    <property type="entry name" value="Aldolase_TIM"/>
</dbReference>
<dbReference type="InterPro" id="IPR006062">
    <property type="entry name" value="His_biosynth"/>
</dbReference>
<dbReference type="InterPro" id="IPR006063">
    <property type="entry name" value="HisA_bact_arch"/>
</dbReference>
<dbReference type="InterPro" id="IPR044524">
    <property type="entry name" value="Isoase_HisA-like"/>
</dbReference>
<dbReference type="InterPro" id="IPR023016">
    <property type="entry name" value="Isoase_HisA-like_bact"/>
</dbReference>
<dbReference type="InterPro" id="IPR011060">
    <property type="entry name" value="RibuloseP-bd_barrel"/>
</dbReference>
<dbReference type="NCBIfam" id="TIGR00007">
    <property type="entry name" value="1-(5-phosphoribosyl)-5-[(5-phosphoribosylamino)methylideneamino]imidazole-4-carboxamide isomerase"/>
    <property type="match status" value="1"/>
</dbReference>
<dbReference type="PANTHER" id="PTHR43090">
    <property type="entry name" value="1-(5-PHOSPHORIBOSYL)-5-[(5-PHOSPHORIBOSYLAMINO)METHYLIDENEAMINO] IMIDAZOLE-4-CARBOXAMIDE ISOMERASE"/>
    <property type="match status" value="1"/>
</dbReference>
<dbReference type="PANTHER" id="PTHR43090:SF2">
    <property type="entry name" value="1-(5-PHOSPHORIBOSYL)-5-[(5-PHOSPHORIBOSYLAMINO)METHYLIDENEAMINO] IMIDAZOLE-4-CARBOXAMIDE ISOMERASE"/>
    <property type="match status" value="1"/>
</dbReference>
<dbReference type="Pfam" id="PF00977">
    <property type="entry name" value="His_biosynth"/>
    <property type="match status" value="1"/>
</dbReference>
<dbReference type="SUPFAM" id="SSF51366">
    <property type="entry name" value="Ribulose-phoshate binding barrel"/>
    <property type="match status" value="1"/>
</dbReference>
<evidence type="ECO:0000255" key="1">
    <source>
        <dbReference type="HAMAP-Rule" id="MF_01014"/>
    </source>
</evidence>
<feature type="chain" id="PRO_1000135096" description="1-(5-phosphoribosyl)-5-[(5-phosphoribosylamino)methylideneamino] imidazole-4-carboxamide isomerase">
    <location>
        <begin position="1"/>
        <end position="237"/>
    </location>
</feature>
<feature type="active site" description="Proton acceptor" evidence="1">
    <location>
        <position position="8"/>
    </location>
</feature>
<feature type="active site" description="Proton donor" evidence="1">
    <location>
        <position position="129"/>
    </location>
</feature>
<reference key="1">
    <citation type="submission" date="2008-05" db="EMBL/GenBank/DDBJ databases">
        <title>Complete genome sequence of Clostridium botulinum E3 str. Alaska E43.</title>
        <authorList>
            <person name="Brinkac L.M."/>
            <person name="Brown J.L."/>
            <person name="Bruce D."/>
            <person name="Detter C."/>
            <person name="Munk C."/>
            <person name="Smith L.A."/>
            <person name="Smith T.J."/>
            <person name="Sutton G."/>
            <person name="Brettin T.S."/>
        </authorList>
    </citation>
    <scope>NUCLEOTIDE SEQUENCE [LARGE SCALE GENOMIC DNA]</scope>
    <source>
        <strain>Alaska E43 / Type E3</strain>
    </source>
</reference>
<protein>
    <recommendedName>
        <fullName evidence="1">1-(5-phosphoribosyl)-5-[(5-phosphoribosylamino)methylideneamino] imidazole-4-carboxamide isomerase</fullName>
        <ecNumber evidence="1">5.3.1.16</ecNumber>
    </recommendedName>
    <alternativeName>
        <fullName evidence="1">Phosphoribosylformimino-5-aminoimidazole carboxamide ribotide isomerase</fullName>
    </alternativeName>
</protein>
<sequence>MIILPAIDIIDGQAVRLYQGDYNKKEVVANDIFNIAKEFECLGAEYIHLVDLDGAKSGYCVNEKIILKLAQTVDVPIEVGGGIRNFETIEKLIENGISRVILGTIAMEDEGLLKKAIECYGEKISVGIDCKNGYVYGRGWLAESKLNYLDFAKNMESLGVKSIIVTDISKDGTLEGPNFDMLMKLKKLVNIDITASGGIRDIENIKELKNIDIYGAITGKAIYSGNLSLKEAIDITR</sequence>
<keyword id="KW-0028">Amino-acid biosynthesis</keyword>
<keyword id="KW-0963">Cytoplasm</keyword>
<keyword id="KW-0368">Histidine biosynthesis</keyword>
<keyword id="KW-0413">Isomerase</keyword>
<comment type="catalytic activity">
    <reaction evidence="1">
        <text>1-(5-phospho-beta-D-ribosyl)-5-[(5-phospho-beta-D-ribosylamino)methylideneamino]imidazole-4-carboxamide = 5-[(5-phospho-1-deoxy-D-ribulos-1-ylimino)methylamino]-1-(5-phospho-beta-D-ribosyl)imidazole-4-carboxamide</text>
        <dbReference type="Rhea" id="RHEA:15469"/>
        <dbReference type="ChEBI" id="CHEBI:58435"/>
        <dbReference type="ChEBI" id="CHEBI:58525"/>
        <dbReference type="EC" id="5.3.1.16"/>
    </reaction>
</comment>
<comment type="pathway">
    <text evidence="1">Amino-acid biosynthesis; L-histidine biosynthesis; L-histidine from 5-phospho-alpha-D-ribose 1-diphosphate: step 4/9.</text>
</comment>
<comment type="subcellular location">
    <subcellularLocation>
        <location evidence="1">Cytoplasm</location>
    </subcellularLocation>
</comment>
<comment type="similarity">
    <text evidence="1">Belongs to the HisA/HisF family.</text>
</comment>
<proteinExistence type="inferred from homology"/>
<organism>
    <name type="scientific">Clostridium botulinum (strain Alaska E43 / Type E3)</name>
    <dbReference type="NCBI Taxonomy" id="508767"/>
    <lineage>
        <taxon>Bacteria</taxon>
        <taxon>Bacillati</taxon>
        <taxon>Bacillota</taxon>
        <taxon>Clostridia</taxon>
        <taxon>Eubacteriales</taxon>
        <taxon>Clostridiaceae</taxon>
        <taxon>Clostridium</taxon>
    </lineage>
</organism>
<gene>
    <name evidence="1" type="primary">hisA</name>
    <name type="ordered locus">CLH_2626</name>
</gene>
<accession>B2UX21</accession>
<name>HIS4_CLOBA</name>